<evidence type="ECO:0000255" key="1">
    <source>
        <dbReference type="HAMAP-Rule" id="MF_04083"/>
    </source>
</evidence>
<comment type="function">
    <molecule>Envelope glycoprotein gp160</molecule>
    <text evidence="1">Oligomerizes in the host endoplasmic reticulum into predominantly trimers. In a second time, gp160 transits in the host Golgi, where glycosylation is completed. The precursor is then proteolytically cleaved in the trans-Golgi and thereby activated by cellular furin or furin-like proteases to produce gp120 and gp41.</text>
</comment>
<comment type="function">
    <molecule>Surface protein gp120</molecule>
    <text evidence="1">Attaches the virus to the host lymphoid cell by binding to the primary receptor CD4. This interaction induces a structural rearrangement creating a high affinity binding site for a chemokine coreceptor like CXCR4 and/or CCR5. Acts as a ligand for CD209/DC-SIGN and CLEC4M/DC-SIGNR, which are respectively found on dendritic cells (DCs), and on endothelial cells of liver sinusoids and lymph node sinuses. These interactions allow capture of viral particles at mucosal surfaces by these cells and subsequent transmission to permissive cells. HIV subverts the migration properties of dendritic cells to gain access to CD4+ T-cells in lymph nodes. Virus transmission to permissive T-cells occurs either in trans (without DCs infection, through viral capture and transmission), or in cis (following DCs productive infection, through the usual CD4-gp120 interaction), thereby inducing a robust infection. In trans infection, bound virions remain infectious over days and it is proposed that they are not degraded, but protected in non-lysosomal acidic organelles within the DCs close to the cell membrane thus contributing to the viral infectious potential during DCs' migration from the periphery to the lymphoid tissues. On arrival at lymphoid tissues, intact virions recycle back to DCs' cell surface allowing virus transmission to CD4+ T-cells.</text>
</comment>
<comment type="function">
    <molecule>Transmembrane protein gp41</molecule>
    <text evidence="1">Acts as a class I viral fusion protein. Under the current model, the protein has at least 3 conformational states: pre-fusion native state, pre-hairpin intermediate state, and post-fusion hairpin state. During fusion of viral and target intracellular membranes, the coiled coil regions (heptad repeats) assume a trimer-of-hairpins structure, positioning the fusion peptide in close proximity to the C-terminal region of the ectodomain. The formation of this structure appears to drive apposition and subsequent fusion of viral and target cell membranes. Complete fusion occurs in host cell endosomes and is dynamin-dependent, however some lipid transfer might occur at the plasma membrane. The virus undergoes clathrin-dependent internalization long before endosomal fusion, thus minimizing the surface exposure of conserved viral epitopes during fusion and reducing the efficacy of inhibitors targeting these epitopes. Membranes fusion leads to delivery of the nucleocapsid into the cytoplasm.</text>
</comment>
<comment type="subunit">
    <molecule>Surface protein gp120</molecule>
    <text evidence="1">The mature envelope protein (Env) consists of a homotrimer of non-covalently associated gp120-gp41 heterodimers. The resulting complex protrudes from the virus surface as a spike. There seems to be as few as 10 spikes on the average virion. Interacts with host CD4, CCR5 and CXCR4. Gp120 also interacts with the C-type lectins CD209/DC-SIGN and CLEC4M/DC-SIGNR (collectively referred to as DC-SIGN(R)). Gp120 and gp41 interact with GalCer. Gp120 interacts with host ITGA4/ITGB7 complex; on CD4+ T-cells, this interaction results in rapid activation of integrin ITGAL/LFA-1, which facilitates efficient cell-to-cell spreading of HIV-1. Gp120 interacts with cell-associated heparan sulfate; this interaction increases virus infectivity on permissive cells and may be involved in infection of CD4- cells.</text>
</comment>
<comment type="subunit">
    <molecule>Transmembrane protein gp41</molecule>
    <text evidence="1">The mature envelope protein (Env) consists of a homotrimer of non-covalently associated gp120-gp41 heterodimers. The resulting complex protrudes from the virus surface as a spike. There seems to be as few as 10 spikes on the average virion.</text>
</comment>
<comment type="subcellular location">
    <molecule>Surface protein gp120</molecule>
    <subcellularLocation>
        <location evidence="1">Virion membrane</location>
        <topology evidence="1">Peripheral membrane protein</topology>
    </subcellularLocation>
    <subcellularLocation>
        <location evidence="1">Host cell membrane</location>
        <topology evidence="1">Peripheral membrane protein</topology>
    </subcellularLocation>
    <subcellularLocation>
        <location evidence="1">Host endosome membrane</location>
        <topology evidence="1">Single-pass type I membrane protein</topology>
    </subcellularLocation>
    <text evidence="1">The surface protein is not anchored to the viral envelope, but associates with the extravirion surface through its binding to TM. It is probably concentrated at the site of budding and incorporated into the virions possibly by contacts between the cytoplasmic tail of Env and the N-terminus of Gag.</text>
</comment>
<comment type="subcellular location">
    <molecule>Transmembrane protein gp41</molecule>
    <subcellularLocation>
        <location evidence="1">Virion membrane</location>
        <topology evidence="1">Single-pass type I membrane protein</topology>
    </subcellularLocation>
    <subcellularLocation>
        <location evidence="1">Host cell membrane</location>
        <topology evidence="1">Single-pass type I membrane protein</topology>
    </subcellularLocation>
    <subcellularLocation>
        <location evidence="1">Host endosome membrane</location>
        <topology evidence="1">Single-pass type I membrane protein</topology>
    </subcellularLocation>
    <text evidence="1">It is probably concentrated at the site of budding and incorporated into the virions possibly by contacts between the cytoplasmic tail of Env and the N-terminus of Gag.</text>
</comment>
<comment type="domain">
    <text evidence="1">Some of the most genetically diverse regions of the viral genome are present in Env. They are called variable regions 1 through 5 (V1 through V5). Coreceptor usage of gp120 is determined mainly by the primary structure of the third variable region (V3) in the outer domain of gp120. The sequence of V3 determines which coreceptor, CCR5 and/or CXCR4 (corresponding to R5/macrophage, X4/T cell and R5X4/T cell and macrophage tropism), is used to trigger the fusion potential of the Env complex, and hence which cells the virus can infect. Binding to CCR5 involves a region adjacent in addition to V3.</text>
</comment>
<comment type="domain">
    <text evidence="1">The membrane proximal external region (MPER) present in gp41 is a tryptophan-rich region recognized by the antibodies 2F5, Z13, and 4E10. MPER seems to play a role in fusion.</text>
</comment>
<comment type="domain">
    <text evidence="1">The 17 amino acids long immunosuppressive region is present in many retroviral envelope proteins. Synthetic peptides derived from this relatively conserved sequence inhibit immune function in vitro and in vivo.</text>
</comment>
<comment type="domain">
    <text evidence="1">The YXXL motif is involved in determining the exact site of viral release at the surface of infected mononuclear cells and promotes endocytosis. YXXL and di-leucine endocytosis motifs interact directly or indirectly with the clathrin adapter complexes, opperate independently, and their activities are not additive.</text>
</comment>
<comment type="domain">
    <text evidence="1">The CD4-binding region is targeted by the antibody b12.</text>
</comment>
<comment type="PTM">
    <text evidence="1">Highly glycosylated by host. The high number of glycan on the protein is reffered to as 'glycan shield' because it contributes to hide protein sequence from adaptive immune system.</text>
</comment>
<comment type="PTM">
    <text evidence="1">Palmitoylation of the transmembrane protein and of Env polyprotein (prior to its proteolytic cleavage) is essential for their association with host cell membrane lipid rafts. Palmitoylation is therefore required for envelope trafficking to classical lipid rafts, but not for viral replication.</text>
</comment>
<comment type="PTM">
    <text evidence="1">Specific enzymatic cleavages in vivo yield mature proteins. Envelope glycoproteins are synthesized as an inactive precursor that is heavily N-glycosylated and processed likely by host cell furin in the Golgi to yield the mature SU and TM proteins. The cleavage site between SU and TM requires the minimal sequence [KR]-X-[KR]-R. About 2 of the 9 disulfide bonds of gp41 are reduced by P4HB/PDI, following binding to CD4 receptor.</text>
</comment>
<comment type="miscellaneous">
    <text evidence="1">Inhibitors targeting HIV-1 viral envelope proteins are used as antiretroviral drugs. Attachment of virions to the cell surface via non-specific interactions and CD4 binding can be blocked by inhibitors that include cyanovirin-N, cyclotriazadisulfonamide analogs, PRO 2000, TNX 355 and PRO 542. In addition, BMS 806 can block CD4-induced conformational changes. Env interactions with the coreceptor molecules can be targeted by CCR5 antagonists including SCH-D, maraviroc (UK 427857) and aplaviroc (GW 873140), and the CXCR4 antagonist AMD 070. Fusion of viral and cellular membranes can be inhibited by peptides such as enfuvirtide and tifuvirtide (T 1249). Resistance to inhibitors associated with mutations in Env are observed. Most of the time, single mutations confer only a modest reduction in drug susceptibility. Combination of several mutations is usually required to develop a high-level drug resistance.</text>
</comment>
<comment type="miscellaneous">
    <text evidence="1">HIV-1 lineages are divided in three main groups, M (for Major), O (for Outlier), and N (for New, or Non-M, Non-O). The vast majority of strains found worldwide belong to the group M. Group O seems to be endemic to and largely confined to Cameroon and neighboring countries in West Central Africa, where these viruses represent a small minority of HIV-1 strains. The group N is represented by a limited number of isolates from Cameroonian persons. The group M is further subdivided in 9 clades or subtypes (A to D, F to H, J and K).</text>
</comment>
<comment type="similarity">
    <text evidence="1">Belongs to the HIV-1 env protein family.</text>
</comment>
<comment type="online information" name="hivdb">
    <link uri="https://hivdb.stanford.edu"/>
    <text>HIV drug resistance database</text>
</comment>
<comment type="online information" name="HIV drug resistance mutations">
    <link uri="https://www.iasusa.org/hiv-drug-resistance/hiv-drug-resistance-mutations/"/>
</comment>
<dbReference type="EMBL" id="L20571">
    <property type="protein sequence ID" value="AAA44864.1"/>
    <property type="molecule type" value="Genomic_RNA"/>
</dbReference>
<dbReference type="SMR" id="Q79670"/>
<dbReference type="GlyCosmos" id="Q79670">
    <property type="glycosylation" value="30 sites, No reported glycans"/>
</dbReference>
<dbReference type="Proteomes" id="UP000007698">
    <property type="component" value="Segment"/>
</dbReference>
<dbReference type="GO" id="GO:0044175">
    <property type="term" value="C:host cell endosome membrane"/>
    <property type="evidence" value="ECO:0007669"/>
    <property type="project" value="UniProtKB-SubCell"/>
</dbReference>
<dbReference type="GO" id="GO:0020002">
    <property type="term" value="C:host cell plasma membrane"/>
    <property type="evidence" value="ECO:0007669"/>
    <property type="project" value="UniProtKB-SubCell"/>
</dbReference>
<dbReference type="GO" id="GO:0016020">
    <property type="term" value="C:membrane"/>
    <property type="evidence" value="ECO:0007669"/>
    <property type="project" value="UniProtKB-UniRule"/>
</dbReference>
<dbReference type="GO" id="GO:0019031">
    <property type="term" value="C:viral envelope"/>
    <property type="evidence" value="ECO:0007669"/>
    <property type="project" value="UniProtKB-KW"/>
</dbReference>
<dbReference type="GO" id="GO:0055036">
    <property type="term" value="C:virion membrane"/>
    <property type="evidence" value="ECO:0007669"/>
    <property type="project" value="UniProtKB-SubCell"/>
</dbReference>
<dbReference type="GO" id="GO:0005198">
    <property type="term" value="F:structural molecule activity"/>
    <property type="evidence" value="ECO:0007669"/>
    <property type="project" value="UniProtKB-UniRule"/>
</dbReference>
<dbReference type="GO" id="GO:0075512">
    <property type="term" value="P:clathrin-dependent endocytosis of virus by host cell"/>
    <property type="evidence" value="ECO:0007669"/>
    <property type="project" value="UniProtKB-UniRule"/>
</dbReference>
<dbReference type="GO" id="GO:0039654">
    <property type="term" value="P:fusion of virus membrane with host endosome membrane"/>
    <property type="evidence" value="ECO:0007669"/>
    <property type="project" value="UniProtKB-UniRule"/>
</dbReference>
<dbReference type="GO" id="GO:0019064">
    <property type="term" value="P:fusion of virus membrane with host plasma membrane"/>
    <property type="evidence" value="ECO:0007669"/>
    <property type="project" value="UniProtKB-UniRule"/>
</dbReference>
<dbReference type="GO" id="GO:1903908">
    <property type="term" value="P:positive regulation of plasma membrane raft polarization"/>
    <property type="evidence" value="ECO:0007669"/>
    <property type="project" value="UniProtKB-UniRule"/>
</dbReference>
<dbReference type="GO" id="GO:1903911">
    <property type="term" value="P:positive regulation of receptor clustering"/>
    <property type="evidence" value="ECO:0007669"/>
    <property type="project" value="UniProtKB-UniRule"/>
</dbReference>
<dbReference type="GO" id="GO:0019082">
    <property type="term" value="P:viral protein processing"/>
    <property type="evidence" value="ECO:0007669"/>
    <property type="project" value="UniProtKB-UniRule"/>
</dbReference>
<dbReference type="GO" id="GO:0019062">
    <property type="term" value="P:virion attachment to host cell"/>
    <property type="evidence" value="ECO:0007669"/>
    <property type="project" value="UniProtKB-UniRule"/>
</dbReference>
<dbReference type="CDD" id="cd09909">
    <property type="entry name" value="HIV-1-like_HR1-HR2"/>
    <property type="match status" value="1"/>
</dbReference>
<dbReference type="FunFam" id="1.10.287.210:FF:000001">
    <property type="entry name" value="Envelope glycoprotein gp160"/>
    <property type="match status" value="1"/>
</dbReference>
<dbReference type="FunFam" id="2.170.40.20:FF:000005">
    <property type="entry name" value="Envelope glycoprotein gp160"/>
    <property type="match status" value="1"/>
</dbReference>
<dbReference type="Gene3D" id="1.10.287.210">
    <property type="match status" value="1"/>
</dbReference>
<dbReference type="Gene3D" id="2.170.40.20">
    <property type="entry name" value="Human immunodeficiency virus 1, Gp160, envelope glycoprotein"/>
    <property type="match status" value="2"/>
</dbReference>
<dbReference type="Gene3D" id="1.20.5.490">
    <property type="entry name" value="Single helix bin"/>
    <property type="match status" value="1"/>
</dbReference>
<dbReference type="HAMAP" id="MF_04083">
    <property type="entry name" value="HIV_ENV"/>
    <property type="match status" value="1"/>
</dbReference>
<dbReference type="InterPro" id="IPR036377">
    <property type="entry name" value="Gp120_core_sf"/>
</dbReference>
<dbReference type="InterPro" id="IPR037527">
    <property type="entry name" value="Gp160"/>
</dbReference>
<dbReference type="InterPro" id="IPR000328">
    <property type="entry name" value="GP41-like"/>
</dbReference>
<dbReference type="InterPro" id="IPR000777">
    <property type="entry name" value="HIV1_Gp120"/>
</dbReference>
<dbReference type="Pfam" id="PF00516">
    <property type="entry name" value="GP120"/>
    <property type="match status" value="2"/>
</dbReference>
<dbReference type="Pfam" id="PF00517">
    <property type="entry name" value="GP41"/>
    <property type="match status" value="1"/>
</dbReference>
<dbReference type="SUPFAM" id="SSF56502">
    <property type="entry name" value="gp120 core"/>
    <property type="match status" value="1"/>
</dbReference>
<dbReference type="SUPFAM" id="SSF58069">
    <property type="entry name" value="Virus ectodomain"/>
    <property type="match status" value="1"/>
</dbReference>
<accession>Q79670</accession>
<protein>
    <recommendedName>
        <fullName evidence="1">Envelope glycoprotein gp160</fullName>
    </recommendedName>
    <alternativeName>
        <fullName evidence="1">Env polyprotein</fullName>
    </alternativeName>
    <component>
        <recommendedName>
            <fullName evidence="1">Surface protein gp120</fullName>
            <shortName evidence="1">SU</shortName>
        </recommendedName>
        <alternativeName>
            <fullName evidence="1">Glycoprotein 120</fullName>
            <shortName evidence="1">gp120</shortName>
        </alternativeName>
    </component>
    <component>
        <recommendedName>
            <fullName evidence="1">Transmembrane protein gp41</fullName>
            <shortName evidence="1">TM</shortName>
        </recommendedName>
        <alternativeName>
            <fullName evidence="1">Glycoprotein 41</fullName>
            <shortName evidence="1">gp41</shortName>
        </alternativeName>
    </component>
</protein>
<proteinExistence type="inferred from homology"/>
<reference key="1">
    <citation type="journal article" date="1994" name="J. Virol.">
        <title>A new subtype of human immunodeficiency virus type 1 (MVP-5180) from Cameroon.</title>
        <authorList>
            <person name="Gurtler L.G."/>
            <person name="Hauser P.H."/>
            <person name="Eberle J."/>
            <person name="von Brunn A."/>
            <person name="Knapp S."/>
            <person name="Zekeng L."/>
            <person name="Tsague J.M."/>
            <person name="Kaptue L."/>
        </authorList>
    </citation>
    <scope>NUCLEOTIDE SEQUENCE [GENOMIC RNA]</scope>
</reference>
<reference key="2">
    <citation type="journal article" date="2003" name="APMIS">
        <title>Pathogens target DC-SIGN to influence their fate DC-SIGN functions as a pathogen receptor with broad specificity.</title>
        <authorList>
            <person name="Geijtenbeek T.B."/>
            <person name="van Kooyk Y."/>
        </authorList>
    </citation>
    <scope>REVIEW</scope>
</reference>
<reference key="3">
    <citation type="journal article" date="2003" name="Biochim. Biophys. Acta">
        <title>The HIV Env-mediated fusion reaction.</title>
        <authorList>
            <person name="Gallo S.A."/>
            <person name="Finnegan C.M."/>
            <person name="Viard M."/>
            <person name="Raviv Y."/>
            <person name="Dimitrov A."/>
            <person name="Rawat S.S."/>
            <person name="Puri A."/>
            <person name="Durell S."/>
            <person name="Blumenthal R."/>
        </authorList>
    </citation>
    <scope>REVIEW</scope>
</reference>
<reference key="4">
    <citation type="journal article" date="2005" name="Cell Death Differ.">
        <title>Mechanisms of apoptosis induction by the HIV-1 envelope.</title>
        <authorList>
            <person name="Perfettini J.-L."/>
            <person name="Castedo M."/>
            <person name="Roumier T."/>
            <person name="Andreau K."/>
            <person name="Nardacci R."/>
            <person name="Piacentini M."/>
            <person name="Kroemer G."/>
        </authorList>
    </citation>
    <scope>REVIEW</scope>
</reference>
<reference key="5">
    <citation type="journal article" date="2005" name="AIDS Res. Hum. Retroviruses">
        <title>V3: HIV's switch-hitter.</title>
        <authorList>
            <person name="Hartley O."/>
            <person name="Klasse P.J."/>
            <person name="Sattentau Q.J."/>
            <person name="Moore J.P."/>
        </authorList>
    </citation>
    <scope>REVIEW</scope>
</reference>
<reference key="6">
    <citation type="journal article" date="2005" name="Drugs">
        <title>Emerging drug targets for antiretroviral therapy.</title>
        <authorList>
            <person name="Reeves J.D."/>
            <person name="Piefer A.J."/>
        </authorList>
    </citation>
    <scope>REVIEW</scope>
</reference>
<reference key="7">
    <citation type="journal article" date="2006" name="EMBO J.">
        <title>HIV and the chemokine system: 10 years later.</title>
        <authorList>
            <person name="Lusso P."/>
        </authorList>
    </citation>
    <scope>REVIEW</scope>
</reference>
<keyword id="KW-0014">AIDS</keyword>
<keyword id="KW-0053">Apoptosis</keyword>
<keyword id="KW-1165">Clathrin-mediated endocytosis of virus by host</keyword>
<keyword id="KW-0165">Cleavage on pair of basic residues</keyword>
<keyword id="KW-0175">Coiled coil</keyword>
<keyword id="KW-1015">Disulfide bond</keyword>
<keyword id="KW-1170">Fusion of virus membrane with host endosomal membrane</keyword>
<keyword id="KW-1168">Fusion of virus membrane with host membrane</keyword>
<keyword id="KW-0325">Glycoprotein</keyword>
<keyword id="KW-1032">Host cell membrane</keyword>
<keyword id="KW-1039">Host endosome</keyword>
<keyword id="KW-1043">Host membrane</keyword>
<keyword id="KW-0945">Host-virus interaction</keyword>
<keyword id="KW-0449">Lipoprotein</keyword>
<keyword id="KW-0472">Membrane</keyword>
<keyword id="KW-0564">Palmitate</keyword>
<keyword id="KW-0732">Signal</keyword>
<keyword id="KW-0812">Transmembrane</keyword>
<keyword id="KW-1133">Transmembrane helix</keyword>
<keyword id="KW-1161">Viral attachment to host cell</keyword>
<keyword id="KW-0261">Viral envelope protein</keyword>
<keyword id="KW-0899">Viral immunoevasion</keyword>
<keyword id="KW-1162">Viral penetration into host cytoplasm</keyword>
<keyword id="KW-0946">Virion</keyword>
<keyword id="KW-1164">Virus endocytosis by host</keyword>
<keyword id="KW-1160">Virus entry into host cell</keyword>
<feature type="signal peptide" evidence="1">
    <location>
        <begin position="1"/>
        <end position="33"/>
    </location>
</feature>
<feature type="chain" id="PRO_0000244681" description="Envelope glycoprotein gp160" evidence="1">
    <location>
        <begin position="34"/>
        <end position="876"/>
    </location>
</feature>
<feature type="chain" id="PRO_0000244682" description="Surface protein gp120" evidence="1">
    <location>
        <begin position="34"/>
        <end position="523"/>
    </location>
</feature>
<feature type="chain" id="PRO_0000244683" description="Transmembrane protein gp41" evidence="1">
    <location>
        <begin position="524"/>
        <end position="876"/>
    </location>
</feature>
<feature type="topological domain" description="Extracellular" evidence="1">
    <location>
        <begin position="34"/>
        <end position="697"/>
    </location>
</feature>
<feature type="transmembrane region" description="Helical" evidence="1">
    <location>
        <begin position="698"/>
        <end position="718"/>
    </location>
</feature>
<feature type="topological domain" description="Cytoplasmic" evidence="1">
    <location>
        <begin position="719"/>
        <end position="876"/>
    </location>
</feature>
<feature type="region of interest" description="V1" evidence="1">
    <location>
        <begin position="132"/>
        <end position="152"/>
    </location>
</feature>
<feature type="region of interest" description="V2" evidence="1">
    <location>
        <begin position="153"/>
        <end position="196"/>
    </location>
</feature>
<feature type="region of interest" description="V3" evidence="1">
    <location>
        <begin position="296"/>
        <end position="333"/>
    </location>
</feature>
<feature type="region of interest" description="CD4-binding loop" evidence="1">
    <location>
        <begin position="369"/>
        <end position="379"/>
    </location>
</feature>
<feature type="region of interest" description="V4" evidence="1">
    <location>
        <begin position="390"/>
        <end position="425"/>
    </location>
</feature>
<feature type="region of interest" description="V5">
    <location>
        <begin position="468"/>
        <end position="478"/>
    </location>
</feature>
<feature type="region of interest" description="V5" evidence="1">
    <location>
        <begin position="470"/>
        <end position="478"/>
    </location>
</feature>
<feature type="region of interest" description="Fusion peptide" evidence="1">
    <location>
        <begin position="524"/>
        <end position="544"/>
    </location>
</feature>
<feature type="region of interest" description="Immunosuppression" evidence="1">
    <location>
        <begin position="586"/>
        <end position="604"/>
    </location>
</feature>
<feature type="region of interest" description="MPER; binding to GalCer" evidence="1">
    <location>
        <begin position="675"/>
        <end position="696"/>
    </location>
</feature>
<feature type="coiled-coil region" evidence="1">
    <location>
        <begin position="646"/>
        <end position="680"/>
    </location>
</feature>
<feature type="short sequence motif" description="YXXL motif; contains endocytosis signal" evidence="1">
    <location>
        <begin position="725"/>
        <end position="728"/>
    </location>
</feature>
<feature type="site" description="Cleavage; by host furin" evidence="1">
    <location>
        <begin position="523"/>
        <end position="524"/>
    </location>
</feature>
<feature type="glycosylation site" description="N-linked (GlcNAc...) asparagine; by host" evidence="1">
    <location>
        <position position="60"/>
    </location>
</feature>
<feature type="glycosylation site" description="N-linked (GlcNAc...) asparagine; by host" evidence="1">
    <location>
        <position position="89"/>
    </location>
</feature>
<feature type="glycosylation site" description="N-linked (GlcNAc...) asparagine; by host" evidence="1">
    <location>
        <position position="138"/>
    </location>
</feature>
<feature type="glycosylation site" description="N-linked (GlcNAc...) asparagine; by host" evidence="1">
    <location>
        <position position="144"/>
    </location>
</feature>
<feature type="glycosylation site" description="N-linked (GlcNAc...) asparagine; by host" evidence="1">
    <location>
        <position position="152"/>
    </location>
</feature>
<feature type="glycosylation site" description="N-linked (GlcNAc...) asparagine; by host" evidence="1">
    <location>
        <position position="156"/>
    </location>
</feature>
<feature type="glycosylation site" description="N-linked (GlcNAc...) asparagine; by host" evidence="1">
    <location>
        <position position="181"/>
    </location>
</feature>
<feature type="glycosylation site" description="N-linked (GlcNAc...) asparagine; by host" evidence="1">
    <location>
        <position position="187"/>
    </location>
</feature>
<feature type="glycosylation site" description="N-linked (GlcNAc...) asparagine; by host" evidence="1">
    <location>
        <position position="197"/>
    </location>
</feature>
<feature type="glycosylation site" description="N-linked (GlcNAc...) asparagine; by host" evidence="1">
    <location>
        <position position="229"/>
    </location>
</feature>
<feature type="glycosylation site" description="N-linked (GlcNAc...) asparagine; by host" evidence="1">
    <location>
        <position position="234"/>
    </location>
</feature>
<feature type="glycosylation site" description="N-linked (GlcNAc...) asparagine; by host" evidence="1">
    <location>
        <position position="241"/>
    </location>
</feature>
<feature type="glycosylation site" description="N-linked (GlcNAc...) asparagine; by host" evidence="1">
    <location>
        <position position="262"/>
    </location>
</feature>
<feature type="glycosylation site" description="N-linked (GlcNAc...) asparagine; by host" evidence="1">
    <location>
        <position position="276"/>
    </location>
</feature>
<feature type="glycosylation site" description="N-linked (GlcNAc...) asparagine; by host" evidence="1">
    <location>
        <position position="293"/>
    </location>
</feature>
<feature type="glycosylation site" description="N-linked (GlcNAc...) asparagine; by host" evidence="1">
    <location>
        <position position="323"/>
    </location>
</feature>
<feature type="glycosylation site" description="N-linked (GlcNAc...) asparagine; by host" evidence="1">
    <location>
        <position position="337"/>
    </location>
</feature>
<feature type="glycosylation site" description="N-linked (GlcNAc...) asparagine; by host" evidence="1">
    <location>
        <position position="357"/>
    </location>
</feature>
<feature type="glycosylation site" description="N-linked (GlcNAc...) asparagine; by host" evidence="1">
    <location>
        <position position="361"/>
    </location>
</feature>
<feature type="glycosylation site" description="N-linked (GlcNAc...) asparagine; by host" evidence="1">
    <location>
        <position position="391"/>
    </location>
</feature>
<feature type="glycosylation site" description="N-linked (GlcNAc...) asparagine; by host" evidence="1">
    <location>
        <position position="397"/>
    </location>
</feature>
<feature type="glycosylation site" description="N-linked (GlcNAc...) asparagine; by host" evidence="1">
    <location>
        <position position="402"/>
    </location>
</feature>
<feature type="glycosylation site" description="N-linked (GlcNAc...) asparagine; by host" evidence="1">
    <location>
        <position position="415"/>
    </location>
</feature>
<feature type="glycosylation site" description="N-linked (GlcNAc...) asparagine; by host" evidence="1">
    <location>
        <position position="420"/>
    </location>
</feature>
<feature type="glycosylation site" description="N-linked (GlcNAc...) asparagine; by host" evidence="1">
    <location>
        <position position="449"/>
    </location>
</feature>
<feature type="glycosylation site" description="N-linked (GlcNAc...) asparagine; by host" evidence="1">
    <location>
        <position position="455"/>
    </location>
</feature>
<feature type="glycosylation site" description="N-linked (GlcNAc...) asparagine; by host" evidence="1">
    <location>
        <position position="468"/>
    </location>
</feature>
<feature type="glycosylation site" description="N-linked (GlcNAc...) asparagine; by host" evidence="1">
    <location>
        <position position="623"/>
    </location>
</feature>
<feature type="glycosylation site" description="N-linked (GlcNAc...) asparagine; by host" evidence="1">
    <location>
        <position position="638"/>
    </location>
</feature>
<feature type="glycosylation site" description="N-linked (GlcNAc...) asparagine; by host" evidence="1">
    <location>
        <position position="650"/>
    </location>
</feature>
<feature type="disulfide bond" evidence="1">
    <location>
        <begin position="55"/>
        <end position="75"/>
    </location>
</feature>
<feature type="disulfide bond" evidence="1">
    <location>
        <begin position="120"/>
        <end position="205"/>
    </location>
</feature>
<feature type="disulfide bond" evidence="1">
    <location>
        <begin position="127"/>
        <end position="196"/>
    </location>
</feature>
<feature type="disulfide bond" evidence="1">
    <location>
        <begin position="132"/>
        <end position="153"/>
    </location>
</feature>
<feature type="disulfide bond" evidence="1">
    <location>
        <begin position="218"/>
        <end position="247"/>
    </location>
</feature>
<feature type="disulfide bond" evidence="1">
    <location>
        <begin position="228"/>
        <end position="239"/>
    </location>
</feature>
<feature type="disulfide bond" evidence="1">
    <location>
        <begin position="296"/>
        <end position="334"/>
    </location>
</feature>
<feature type="disulfide bond" evidence="1">
    <location>
        <begin position="383"/>
        <end position="452"/>
    </location>
</feature>
<feature type="disulfide bond" evidence="1">
    <location>
        <begin position="390"/>
        <end position="425"/>
    </location>
</feature>
<feature type="disulfide bond" evidence="1">
    <location>
        <begin position="610"/>
        <end position="616"/>
    </location>
</feature>
<organismHost>
    <name type="scientific">Homo sapiens</name>
    <name type="common">Human</name>
    <dbReference type="NCBI Taxonomy" id="9606"/>
</organismHost>
<sequence>MTVTMKVMKKNNRKSWSLYIAMALLIPCLSYSKQLYATVYSGVPVWEEAAPVLFCASDANLTSTEQHNIWASQACVPTDPNPHEFPLGNVTDNFDIWKNYMVDQMHEDIISLWEQSLKPCEKMTFLCVQMNCVDLQTNKTGLLNETINEMRNCSFNVTTVLTDKKEQKQALFYVSDLSKVNDSNAVNGTTYMLTNCNSTIIKQACPKVSFEPIPIHYCAPTGYAIFKCNDTDFNGTGLCHNISVVTCTHGIKPTVSTQLILNGTLSREKIRIMGKNITESAKNIIVTLNTPINMTCIREGIAEVQDIYTGPMRWRSMTLKRSNNTSPRSRVAYCTYNKTVWENALQQTAIRYLNLVNQTENVTIIFSRTSGGDAEVSHLHFNCHGEFFYCNTSGMFNYTFINCTKSGCQEIKGSNETNKNGTIPCKLRQLVRSWMKGESRIYAPPIPGNLTCHSNITGMILQLDQPWNSTGENTLRPVGGDMKDIWRTKLYNYKVVQIKPFSVAPTKMSRPIINIHTPHREKRAVGLGMLFLGVLSAAGSTMGAAATALTVRTHSVLKGIVQQQDNLLRAIQAQQHLLRLSVWGIRQLRARLQALETLIQNQQRLNLWGCKGKLICYTSVKWNTSWSGRYNDDSIWDNLTWQQWDQHINNVSSIIYDEIQAAQDQQEKNVKALLELDEWASLWNWFDITKWLWYIKIAIIIVGALIGIRVIMIILNLVKNIRQGYQPLSLQIPVPHRQEAETPGRTGEEGGEGDRPKWTALPPGFLQQLYTDLRTIILWTYHLLSNLISGIRRLIDYLGLGLWILGQKTIEACRLCGAVMQYWLQELKNSATNLLDTIAVSVANWTDGIILGLQRIGQGFLHIPRRIRQGAERILV</sequence>
<name>ENV_HV1MV</name>
<gene>
    <name evidence="1" type="primary">env</name>
</gene>
<organism>
    <name type="scientific">Human immunodeficiency virus type 1 group O (isolate MVP5180)</name>
    <name type="common">HIV-1</name>
    <dbReference type="NCBI Taxonomy" id="388816"/>
    <lineage>
        <taxon>Viruses</taxon>
        <taxon>Riboviria</taxon>
        <taxon>Pararnavirae</taxon>
        <taxon>Artverviricota</taxon>
        <taxon>Revtraviricetes</taxon>
        <taxon>Ortervirales</taxon>
        <taxon>Retroviridae</taxon>
        <taxon>Orthoretrovirinae</taxon>
        <taxon>Lentivirus</taxon>
        <taxon>Human immunodeficiency virus type 1</taxon>
    </lineage>
</organism>